<proteinExistence type="inferred from homology"/>
<feature type="chain" id="PRO_1000101363" description="Glycine--tRNA ligase beta subunit">
    <location>
        <begin position="1"/>
        <end position="713"/>
    </location>
</feature>
<dbReference type="EC" id="6.1.1.14" evidence="1"/>
<dbReference type="EMBL" id="CP000951">
    <property type="protein sequence ID" value="ACB00434.1"/>
    <property type="molecule type" value="Genomic_DNA"/>
</dbReference>
<dbReference type="RefSeq" id="WP_012308052.1">
    <property type="nucleotide sequence ID" value="NZ_JAHHPU010000003.1"/>
</dbReference>
<dbReference type="SMR" id="B1XK79"/>
<dbReference type="STRING" id="32049.SYNPCC7002_A2456"/>
<dbReference type="KEGG" id="syp:SYNPCC7002_A2456"/>
<dbReference type="eggNOG" id="COG0751">
    <property type="taxonomic scope" value="Bacteria"/>
</dbReference>
<dbReference type="HOGENOM" id="CLU_007220_2_2_3"/>
<dbReference type="Proteomes" id="UP000001688">
    <property type="component" value="Chromosome"/>
</dbReference>
<dbReference type="GO" id="GO:0005829">
    <property type="term" value="C:cytosol"/>
    <property type="evidence" value="ECO:0007669"/>
    <property type="project" value="TreeGrafter"/>
</dbReference>
<dbReference type="GO" id="GO:0004814">
    <property type="term" value="F:arginine-tRNA ligase activity"/>
    <property type="evidence" value="ECO:0007669"/>
    <property type="project" value="InterPro"/>
</dbReference>
<dbReference type="GO" id="GO:0005524">
    <property type="term" value="F:ATP binding"/>
    <property type="evidence" value="ECO:0007669"/>
    <property type="project" value="UniProtKB-UniRule"/>
</dbReference>
<dbReference type="GO" id="GO:0004820">
    <property type="term" value="F:glycine-tRNA ligase activity"/>
    <property type="evidence" value="ECO:0007669"/>
    <property type="project" value="UniProtKB-UniRule"/>
</dbReference>
<dbReference type="GO" id="GO:0006420">
    <property type="term" value="P:arginyl-tRNA aminoacylation"/>
    <property type="evidence" value="ECO:0007669"/>
    <property type="project" value="InterPro"/>
</dbReference>
<dbReference type="GO" id="GO:0006426">
    <property type="term" value="P:glycyl-tRNA aminoacylation"/>
    <property type="evidence" value="ECO:0007669"/>
    <property type="project" value="UniProtKB-UniRule"/>
</dbReference>
<dbReference type="HAMAP" id="MF_00255">
    <property type="entry name" value="Gly_tRNA_synth_beta"/>
    <property type="match status" value="1"/>
</dbReference>
<dbReference type="InterPro" id="IPR008909">
    <property type="entry name" value="DALR_anticod-bd"/>
</dbReference>
<dbReference type="InterPro" id="IPR015944">
    <property type="entry name" value="Gly-tRNA-synth_bsu"/>
</dbReference>
<dbReference type="InterPro" id="IPR006194">
    <property type="entry name" value="Gly-tRNA-synth_heterodimer"/>
</dbReference>
<dbReference type="NCBIfam" id="TIGR00211">
    <property type="entry name" value="glyS"/>
    <property type="match status" value="1"/>
</dbReference>
<dbReference type="PANTHER" id="PTHR30075:SF2">
    <property type="entry name" value="GLYCINE--TRNA LIGASE, CHLOROPLASTIC_MITOCHONDRIAL 2"/>
    <property type="match status" value="1"/>
</dbReference>
<dbReference type="PANTHER" id="PTHR30075">
    <property type="entry name" value="GLYCYL-TRNA SYNTHETASE"/>
    <property type="match status" value="1"/>
</dbReference>
<dbReference type="Pfam" id="PF05746">
    <property type="entry name" value="DALR_1"/>
    <property type="match status" value="1"/>
</dbReference>
<dbReference type="Pfam" id="PF02092">
    <property type="entry name" value="tRNA_synt_2f"/>
    <property type="match status" value="1"/>
</dbReference>
<dbReference type="PRINTS" id="PR01045">
    <property type="entry name" value="TRNASYNTHGB"/>
</dbReference>
<dbReference type="SUPFAM" id="SSF109604">
    <property type="entry name" value="HD-domain/PDEase-like"/>
    <property type="match status" value="1"/>
</dbReference>
<dbReference type="PROSITE" id="PS50861">
    <property type="entry name" value="AA_TRNA_LIGASE_II_GLYAB"/>
    <property type="match status" value="1"/>
</dbReference>
<comment type="catalytic activity">
    <reaction evidence="1">
        <text>tRNA(Gly) + glycine + ATP = glycyl-tRNA(Gly) + AMP + diphosphate</text>
        <dbReference type="Rhea" id="RHEA:16013"/>
        <dbReference type="Rhea" id="RHEA-COMP:9664"/>
        <dbReference type="Rhea" id="RHEA-COMP:9683"/>
        <dbReference type="ChEBI" id="CHEBI:30616"/>
        <dbReference type="ChEBI" id="CHEBI:33019"/>
        <dbReference type="ChEBI" id="CHEBI:57305"/>
        <dbReference type="ChEBI" id="CHEBI:78442"/>
        <dbReference type="ChEBI" id="CHEBI:78522"/>
        <dbReference type="ChEBI" id="CHEBI:456215"/>
        <dbReference type="EC" id="6.1.1.14"/>
    </reaction>
</comment>
<comment type="subunit">
    <text evidence="1">Tetramer of two alpha and two beta subunits.</text>
</comment>
<comment type="subcellular location">
    <subcellularLocation>
        <location evidence="1">Cytoplasm</location>
    </subcellularLocation>
</comment>
<comment type="similarity">
    <text evidence="1">Belongs to the class-II aminoacyl-tRNA synthetase family.</text>
</comment>
<keyword id="KW-0030">Aminoacyl-tRNA synthetase</keyword>
<keyword id="KW-0067">ATP-binding</keyword>
<keyword id="KW-0963">Cytoplasm</keyword>
<keyword id="KW-0436">Ligase</keyword>
<keyword id="KW-0547">Nucleotide-binding</keyword>
<keyword id="KW-0648">Protein biosynthesis</keyword>
<keyword id="KW-1185">Reference proteome</keyword>
<gene>
    <name evidence="1" type="primary">glyS</name>
    <name type="ordered locus">SYNPCC7002_A2456</name>
</gene>
<name>SYGB_PICP2</name>
<evidence type="ECO:0000255" key="1">
    <source>
        <dbReference type="HAMAP-Rule" id="MF_00255"/>
    </source>
</evidence>
<accession>B1XK79</accession>
<sequence>MATYLIEVGTEELPADFVAAAIAQLKDRVSHSLTEYFLTPDGIEVYGTPRRLAVLIQGLPDQQADREEEIKGPPAAAAFKEGQPTKAAEGFARKQGVELSALEVRPTEKGDFVFVQKKTLGRPTPEILQELVLGWFTALEGRRFMRWADGDLRFPRPIRWLVSLWNDAVLPLELVNGSGKLEAGRISRGHRILHQGDVTLNNAADYVVTLQQAFVEVNPQVREEKIVAGVKAAAAEIGGEAEMPADLLAEVVNLVEYPTAVVGDIEAEFLELPTEVITTVMVTHQRYFAVRDRQDKTKLLPKFITISNGDPKKSEIIAAGNGRVIRARLADGQFFYRADCDEHLETYLPQLEAVTFQEELGTMRDKVDRIMEISQQIAEQLGLSEADKEIIASTAMLCKADLVTQMVYEFPELQGIMGQKYALVSGEAPAVAEGIFEHYLPRNADDILPQTLAGQVVGMGDRLDTLVSIFGLGMIPSGSSDPFALRRAANAIITVAWDAGLEIDLGELLAQGAKDFVTAHPDKTSPLEALQSFFIQRIQTLLQDEKGIDYDLVNAVLGDDAEYTERALTDLLDVGDRAAFLQSIRDDGQLAKIYATVNRSAKLAAKGNLSTDSLDPTGVINPEKFAQNSERDLYAGLVELVPTTEVARTERDYQKLIDGLAALAPTVERFFDGEDSVLVMAEDPAVRENRLNLLGLLRNHARVLADFGAIVKQ</sequence>
<protein>
    <recommendedName>
        <fullName evidence="1">Glycine--tRNA ligase beta subunit</fullName>
        <ecNumber evidence="1">6.1.1.14</ecNumber>
    </recommendedName>
    <alternativeName>
        <fullName evidence="1">Glycyl-tRNA synthetase beta subunit</fullName>
        <shortName evidence="1">GlyRS</shortName>
    </alternativeName>
</protein>
<reference key="1">
    <citation type="submission" date="2008-02" db="EMBL/GenBank/DDBJ databases">
        <title>Complete sequence of Synechococcus sp. PCC 7002.</title>
        <authorList>
            <person name="Li T."/>
            <person name="Zhao J."/>
            <person name="Zhao C."/>
            <person name="Liu Z."/>
            <person name="Zhao F."/>
            <person name="Marquardt J."/>
            <person name="Nomura C.T."/>
            <person name="Persson S."/>
            <person name="Detter J.C."/>
            <person name="Richardson P.M."/>
            <person name="Lanz C."/>
            <person name="Schuster S.C."/>
            <person name="Wang J."/>
            <person name="Li S."/>
            <person name="Huang X."/>
            <person name="Cai T."/>
            <person name="Yu Z."/>
            <person name="Luo J."/>
            <person name="Zhao J."/>
            <person name="Bryant D.A."/>
        </authorList>
    </citation>
    <scope>NUCLEOTIDE SEQUENCE [LARGE SCALE GENOMIC DNA]</scope>
    <source>
        <strain>ATCC 27264 / PCC 7002 / PR-6</strain>
    </source>
</reference>
<organism>
    <name type="scientific">Picosynechococcus sp. (strain ATCC 27264 / PCC 7002 / PR-6)</name>
    <name type="common">Agmenellum quadruplicatum</name>
    <dbReference type="NCBI Taxonomy" id="32049"/>
    <lineage>
        <taxon>Bacteria</taxon>
        <taxon>Bacillati</taxon>
        <taxon>Cyanobacteriota</taxon>
        <taxon>Cyanophyceae</taxon>
        <taxon>Oscillatoriophycideae</taxon>
        <taxon>Chroococcales</taxon>
        <taxon>Geminocystaceae</taxon>
        <taxon>Picosynechococcus</taxon>
    </lineage>
</organism>